<protein>
    <recommendedName>
        <fullName evidence="1">Cytochrome b6-f complex subunit 4</fullName>
    </recommendedName>
    <alternativeName>
        <fullName evidence="1">17 kDa polypeptide</fullName>
    </alternativeName>
</protein>
<dbReference type="EMBL" id="AJ271818">
    <property type="protein sequence ID" value="CAB72243.1"/>
    <property type="molecule type" value="Genomic_DNA"/>
</dbReference>
<dbReference type="EMBL" id="CP000117">
    <property type="protein sequence ID" value="ABA23049.1"/>
    <property type="molecule type" value="Genomic_DNA"/>
</dbReference>
<dbReference type="SMR" id="Q9L3Q0"/>
<dbReference type="STRING" id="240292.Ava_3442"/>
<dbReference type="KEGG" id="ava:Ava_3442"/>
<dbReference type="eggNOG" id="COG1290">
    <property type="taxonomic scope" value="Bacteria"/>
</dbReference>
<dbReference type="HOGENOM" id="CLU_112652_0_0_3"/>
<dbReference type="Proteomes" id="UP000002533">
    <property type="component" value="Chromosome"/>
</dbReference>
<dbReference type="GO" id="GO:0031676">
    <property type="term" value="C:plasma membrane-derived thylakoid membrane"/>
    <property type="evidence" value="ECO:0007669"/>
    <property type="project" value="UniProtKB-SubCell"/>
</dbReference>
<dbReference type="GO" id="GO:0045158">
    <property type="term" value="F:electron transporter, transferring electrons within cytochrome b6/f complex of photosystem II activity"/>
    <property type="evidence" value="ECO:0007669"/>
    <property type="project" value="UniProtKB-UniRule"/>
</dbReference>
<dbReference type="GO" id="GO:0045156">
    <property type="term" value="F:electron transporter, transferring electrons within the cyclic electron transport pathway of photosynthesis activity"/>
    <property type="evidence" value="ECO:0007669"/>
    <property type="project" value="InterPro"/>
</dbReference>
<dbReference type="GO" id="GO:0016491">
    <property type="term" value="F:oxidoreductase activity"/>
    <property type="evidence" value="ECO:0007669"/>
    <property type="project" value="InterPro"/>
</dbReference>
<dbReference type="GO" id="GO:0009767">
    <property type="term" value="P:photosynthetic electron transport chain"/>
    <property type="evidence" value="ECO:0007669"/>
    <property type="project" value="InterPro"/>
</dbReference>
<dbReference type="CDD" id="cd00290">
    <property type="entry name" value="cytochrome_b_C"/>
    <property type="match status" value="1"/>
</dbReference>
<dbReference type="FunFam" id="1.10.287.980:FF:000001">
    <property type="entry name" value="Cytochrome b6-f complex subunit 4"/>
    <property type="match status" value="1"/>
</dbReference>
<dbReference type="FunFam" id="1.20.5.510:FF:000002">
    <property type="entry name" value="Cytochrome b6-f complex subunit 4"/>
    <property type="match status" value="1"/>
</dbReference>
<dbReference type="Gene3D" id="1.10.287.980">
    <property type="entry name" value="plastocyanin oxidoreductase"/>
    <property type="match status" value="1"/>
</dbReference>
<dbReference type="Gene3D" id="1.20.5.510">
    <property type="entry name" value="Single helix bin"/>
    <property type="match status" value="1"/>
</dbReference>
<dbReference type="HAMAP" id="MF_01344">
    <property type="entry name" value="Cytb6_f_subIV"/>
    <property type="match status" value="1"/>
</dbReference>
<dbReference type="InterPro" id="IPR005798">
    <property type="entry name" value="Cyt_b/b6_C"/>
</dbReference>
<dbReference type="InterPro" id="IPR036150">
    <property type="entry name" value="Cyt_b/b6_C_sf"/>
</dbReference>
<dbReference type="InterPro" id="IPR005870">
    <property type="entry name" value="Cyt_b6/f_cplx_suIV"/>
</dbReference>
<dbReference type="InterPro" id="IPR048260">
    <property type="entry name" value="Cytochrome_b_C_euk/bac"/>
</dbReference>
<dbReference type="NCBIfam" id="TIGR01156">
    <property type="entry name" value="cytb6_f_IV"/>
    <property type="match status" value="1"/>
</dbReference>
<dbReference type="PANTHER" id="PTHR19271">
    <property type="entry name" value="CYTOCHROME B"/>
    <property type="match status" value="1"/>
</dbReference>
<dbReference type="PANTHER" id="PTHR19271:SF40">
    <property type="entry name" value="CYTOCHROME B"/>
    <property type="match status" value="1"/>
</dbReference>
<dbReference type="Pfam" id="PF00032">
    <property type="entry name" value="Cytochrom_B_C"/>
    <property type="match status" value="1"/>
</dbReference>
<dbReference type="PIRSF" id="PIRSF000033">
    <property type="entry name" value="B6f_17K"/>
    <property type="match status" value="1"/>
</dbReference>
<dbReference type="SUPFAM" id="SSF81648">
    <property type="entry name" value="a domain/subunit of cytochrome bc1 complex (Ubiquinol-cytochrome c reductase)"/>
    <property type="match status" value="1"/>
</dbReference>
<dbReference type="PROSITE" id="PS51003">
    <property type="entry name" value="CYTB_CTER"/>
    <property type="match status" value="1"/>
</dbReference>
<comment type="function">
    <text evidence="1">Component of the cytochrome b6-f complex, which mediates electron transfer between photosystem II (PSII) and photosystem I (PSI), cyclic electron flow around PSI, and state transitions.</text>
</comment>
<comment type="subunit">
    <text evidence="1">The 4 large subunits of the cytochrome b6-f complex are cytochrome b6, subunit IV (17 kDa polypeptide, PetD), cytochrome f and the Rieske protein, while the 4 small subunits are PetG, PetL, PetM and PetN. The complex functions as a dimer.</text>
</comment>
<comment type="subcellular location">
    <subcellularLocation>
        <location evidence="1">Cellular thylakoid membrane</location>
        <topology evidence="1">Multi-pass membrane protein</topology>
    </subcellularLocation>
</comment>
<comment type="similarity">
    <text evidence="1">Belongs to the cytochrome b family. PetD subfamily.</text>
</comment>
<keyword id="KW-0249">Electron transport</keyword>
<keyword id="KW-0472">Membrane</keyword>
<keyword id="KW-0602">Photosynthesis</keyword>
<keyword id="KW-0793">Thylakoid</keyword>
<keyword id="KW-0812">Transmembrane</keyword>
<keyword id="KW-1133">Transmembrane helix</keyword>
<keyword id="KW-0813">Transport</keyword>
<feature type="chain" id="PRO_0000061899" description="Cytochrome b6-f complex subunit 4">
    <location>
        <begin position="1"/>
        <end position="160"/>
    </location>
</feature>
<feature type="transmembrane region" description="Helical" evidence="1">
    <location>
        <begin position="36"/>
        <end position="56"/>
    </location>
</feature>
<feature type="transmembrane region" description="Helical" evidence="1">
    <location>
        <begin position="95"/>
        <end position="115"/>
    </location>
</feature>
<feature type="transmembrane region" description="Helical" evidence="1">
    <location>
        <begin position="131"/>
        <end position="151"/>
    </location>
</feature>
<accession>Q9L3Q0</accession>
<accession>Q3M7I7</accession>
<name>PETD_TRIV2</name>
<evidence type="ECO:0000255" key="1">
    <source>
        <dbReference type="HAMAP-Rule" id="MF_01344"/>
    </source>
</evidence>
<organism>
    <name type="scientific">Trichormus variabilis (strain ATCC 29413 / PCC 7937)</name>
    <name type="common">Anabaena variabilis</name>
    <dbReference type="NCBI Taxonomy" id="240292"/>
    <lineage>
        <taxon>Bacteria</taxon>
        <taxon>Bacillati</taxon>
        <taxon>Cyanobacteriota</taxon>
        <taxon>Cyanophyceae</taxon>
        <taxon>Nostocales</taxon>
        <taxon>Nostocaceae</taxon>
        <taxon>Trichormus</taxon>
    </lineage>
</organism>
<proteinExistence type="inferred from homology"/>
<sequence length="160" mass="17527">MATQKKPDLSDPTLRAKLAKGMGHNYYGEPAWPNDLLYVFPIVIMGSFACIVALAVLDPAMTGEPANPFATPLEILPEWYLYPVFQILRSLPNKLLGVLAMASVPLGLILVPFIENVNKFQNPFRRPVATTVFLFGTLVTLWLGIGAALPLDKSLTLGLF</sequence>
<reference key="1">
    <citation type="submission" date="2000-10" db="EMBL/GenBank/DDBJ databases">
        <title>b6f complex of Anabaena variabilis.</title>
        <authorList>
            <person name="Arnold M."/>
        </authorList>
    </citation>
    <scope>NUCLEOTIDE SEQUENCE [GENOMIC DNA]</scope>
    <source>
        <strain>FD</strain>
    </source>
</reference>
<reference key="2">
    <citation type="journal article" date="2014" name="Stand. Genomic Sci.">
        <title>Complete genome sequence of Anabaena variabilis ATCC 29413.</title>
        <authorList>
            <person name="Thiel T."/>
            <person name="Pratte B.S."/>
            <person name="Zhong J."/>
            <person name="Goodwin L."/>
            <person name="Copeland A."/>
            <person name="Lucas S."/>
            <person name="Han C."/>
            <person name="Pitluck S."/>
            <person name="Land M.L."/>
            <person name="Kyrpides N.C."/>
            <person name="Woyke T."/>
        </authorList>
    </citation>
    <scope>NUCLEOTIDE SEQUENCE [LARGE SCALE GENOMIC DNA]</scope>
    <source>
        <strain>ATCC 29413 / PCC 7937</strain>
    </source>
</reference>
<gene>
    <name evidence="1" type="primary">petD</name>
    <name type="ordered locus">Ava_3442</name>
</gene>